<keyword id="KW-0002">3D-structure</keyword>
<keyword id="KW-0342">GTP-binding</keyword>
<keyword id="KW-0378">Hydrolase</keyword>
<keyword id="KW-0479">Metal-binding</keyword>
<keyword id="KW-0533">Nickel</keyword>
<keyword id="KW-0547">Nucleotide-binding</keyword>
<keyword id="KW-1185">Reference proteome</keyword>
<keyword id="KW-0862">Zinc</keyword>
<dbReference type="EMBL" id="L77117">
    <property type="protein sequence ID" value="AAB98429.1"/>
    <property type="molecule type" value="Genomic_DNA"/>
</dbReference>
<dbReference type="PIR" id="B64355">
    <property type="entry name" value="B64355"/>
</dbReference>
<dbReference type="RefSeq" id="WP_010869941.1">
    <property type="nucleotide sequence ID" value="NC_000909.1"/>
</dbReference>
<dbReference type="PDB" id="2HF8">
    <property type="method" value="X-ray"/>
    <property type="resolution" value="2.10 A"/>
    <property type="chains" value="A/B=1-221"/>
</dbReference>
<dbReference type="PDB" id="2HF9">
    <property type="method" value="X-ray"/>
    <property type="resolution" value="1.90 A"/>
    <property type="chains" value="A/B=1-221"/>
</dbReference>
<dbReference type="PDBsum" id="2HF8"/>
<dbReference type="PDBsum" id="2HF9"/>
<dbReference type="SMR" id="Q57884"/>
<dbReference type="FunCoup" id="Q57884">
    <property type="interactions" value="36"/>
</dbReference>
<dbReference type="STRING" id="243232.MJ_0442"/>
<dbReference type="PaxDb" id="243232-MJ_0442"/>
<dbReference type="EnsemblBacteria" id="AAB98429">
    <property type="protein sequence ID" value="AAB98429"/>
    <property type="gene ID" value="MJ_0442"/>
</dbReference>
<dbReference type="GeneID" id="1451302"/>
<dbReference type="KEGG" id="mja:MJ_0442"/>
<dbReference type="eggNOG" id="arCOG01231">
    <property type="taxonomic scope" value="Archaea"/>
</dbReference>
<dbReference type="HOGENOM" id="CLU_056148_0_1_2"/>
<dbReference type="InParanoid" id="Q57884"/>
<dbReference type="OrthoDB" id="812at2157"/>
<dbReference type="PhylomeDB" id="Q57884"/>
<dbReference type="EvolutionaryTrace" id="Q57884"/>
<dbReference type="Proteomes" id="UP000000805">
    <property type="component" value="Chromosome"/>
</dbReference>
<dbReference type="GO" id="GO:0005525">
    <property type="term" value="F:GTP binding"/>
    <property type="evidence" value="ECO:0007669"/>
    <property type="project" value="UniProtKB-KW"/>
</dbReference>
<dbReference type="GO" id="GO:0003924">
    <property type="term" value="F:GTPase activity"/>
    <property type="evidence" value="ECO:0000318"/>
    <property type="project" value="GO_Central"/>
</dbReference>
<dbReference type="GO" id="GO:0016151">
    <property type="term" value="F:nickel cation binding"/>
    <property type="evidence" value="ECO:0000318"/>
    <property type="project" value="GO_Central"/>
</dbReference>
<dbReference type="GO" id="GO:0008270">
    <property type="term" value="F:zinc ion binding"/>
    <property type="evidence" value="ECO:0000318"/>
    <property type="project" value="GO_Central"/>
</dbReference>
<dbReference type="GO" id="GO:0051604">
    <property type="term" value="P:protein maturation"/>
    <property type="evidence" value="ECO:0000318"/>
    <property type="project" value="GO_Central"/>
</dbReference>
<dbReference type="CDD" id="cd05390">
    <property type="entry name" value="HypB"/>
    <property type="match status" value="1"/>
</dbReference>
<dbReference type="Gene3D" id="3.40.50.300">
    <property type="entry name" value="P-loop containing nucleotide triphosphate hydrolases"/>
    <property type="match status" value="1"/>
</dbReference>
<dbReference type="InterPro" id="IPR003495">
    <property type="entry name" value="CobW/HypB/UreG_nucleotide-bd"/>
</dbReference>
<dbReference type="InterPro" id="IPR004392">
    <property type="entry name" value="Hyd_mat_HypB"/>
</dbReference>
<dbReference type="InterPro" id="IPR027417">
    <property type="entry name" value="P-loop_NTPase"/>
</dbReference>
<dbReference type="NCBIfam" id="TIGR00073">
    <property type="entry name" value="hypB"/>
    <property type="match status" value="1"/>
</dbReference>
<dbReference type="PANTHER" id="PTHR30134:SF2">
    <property type="entry name" value="HYDROGENASE MATURATION FACTOR HYPB"/>
    <property type="match status" value="1"/>
</dbReference>
<dbReference type="PANTHER" id="PTHR30134">
    <property type="entry name" value="HYDROGENASE PROTEIN ASSEMBLY PROTEIN, NICKEL CHAPERONE"/>
    <property type="match status" value="1"/>
</dbReference>
<dbReference type="Pfam" id="PF02492">
    <property type="entry name" value="cobW"/>
    <property type="match status" value="1"/>
</dbReference>
<dbReference type="PIRSF" id="PIRSF005624">
    <property type="entry name" value="Ni-bind_GTPase"/>
    <property type="match status" value="1"/>
</dbReference>
<dbReference type="SUPFAM" id="SSF52540">
    <property type="entry name" value="P-loop containing nucleoside triphosphate hydrolases"/>
    <property type="match status" value="1"/>
</dbReference>
<name>HYPB_METJA</name>
<gene>
    <name evidence="4" type="primary">hypB</name>
    <name type="ordered locus">MJ0442</name>
</gene>
<reference key="1">
    <citation type="journal article" date="1996" name="Science">
        <title>Complete genome sequence of the methanogenic archaeon, Methanococcus jannaschii.</title>
        <authorList>
            <person name="Bult C.J."/>
            <person name="White O."/>
            <person name="Olsen G.J."/>
            <person name="Zhou L."/>
            <person name="Fleischmann R.D."/>
            <person name="Sutton G.G."/>
            <person name="Blake J.A."/>
            <person name="FitzGerald L.M."/>
            <person name="Clayton R.A."/>
            <person name="Gocayne J.D."/>
            <person name="Kerlavage A.R."/>
            <person name="Dougherty B.A."/>
            <person name="Tomb J.-F."/>
            <person name="Adams M.D."/>
            <person name="Reich C.I."/>
            <person name="Overbeek R."/>
            <person name="Kirkness E.F."/>
            <person name="Weinstock K.G."/>
            <person name="Merrick J.M."/>
            <person name="Glodek A."/>
            <person name="Scott J.L."/>
            <person name="Geoghagen N.S.M."/>
            <person name="Weidman J.F."/>
            <person name="Fuhrmann J.L."/>
            <person name="Nguyen D."/>
            <person name="Utterback T.R."/>
            <person name="Kelley J.M."/>
            <person name="Peterson J.D."/>
            <person name="Sadow P.W."/>
            <person name="Hanna M.C."/>
            <person name="Cotton M.D."/>
            <person name="Roberts K.M."/>
            <person name="Hurst M.A."/>
            <person name="Kaine B.P."/>
            <person name="Borodovsky M."/>
            <person name="Klenk H.-P."/>
            <person name="Fraser C.M."/>
            <person name="Smith H.O."/>
            <person name="Woese C.R."/>
            <person name="Venter J.C."/>
        </authorList>
    </citation>
    <scope>NUCLEOTIDE SEQUENCE [LARGE SCALE GENOMIC DNA]</scope>
    <source>
        <strain>ATCC 43067 / DSM 2661 / JAL-1 / JCM 10045 / NBRC 100440</strain>
    </source>
</reference>
<reference evidence="6 7" key="2">
    <citation type="journal article" date="2006" name="J. Biol. Chem.">
        <title>Structural insights into HypB, a GTP-binding protein that regulates metal binding.</title>
        <authorList>
            <person name="Gasper R."/>
            <person name="Scrima A."/>
            <person name="Wittinghofer A."/>
        </authorList>
    </citation>
    <scope>X-RAY CRYSTALLOGRAPHY (1.90 ANGSTROMS) IN COMPLEX WITH ZINC</scope>
    <scope>SUBUNIT</scope>
</reference>
<evidence type="ECO:0000250" key="1">
    <source>
        <dbReference type="UniProtKB" id="O25560"/>
    </source>
</evidence>
<evidence type="ECO:0000250" key="2">
    <source>
        <dbReference type="UniProtKB" id="P0AAN3"/>
    </source>
</evidence>
<evidence type="ECO:0000269" key="3">
    <source>
    </source>
</evidence>
<evidence type="ECO:0000303" key="4">
    <source>
    </source>
</evidence>
<evidence type="ECO:0000305" key="5"/>
<evidence type="ECO:0007744" key="6">
    <source>
        <dbReference type="PDB" id="2HF8"/>
    </source>
</evidence>
<evidence type="ECO:0007744" key="7">
    <source>
        <dbReference type="PDB" id="2HF9"/>
    </source>
</evidence>
<evidence type="ECO:0007829" key="8">
    <source>
        <dbReference type="PDB" id="2HF9"/>
    </source>
</evidence>
<feature type="chain" id="PRO_0000201445" description="Probable hydrogenase maturation factor HypB">
    <location>
        <begin position="1"/>
        <end position="221"/>
    </location>
</feature>
<feature type="region of interest" description="G-domain" evidence="2">
    <location>
        <begin position="35"/>
        <end position="196"/>
    </location>
</feature>
<feature type="binding site" evidence="1">
    <location>
        <position position="95"/>
    </location>
    <ligand>
        <name>Ni(2+)</name>
        <dbReference type="ChEBI" id="CHEBI:49786"/>
    </ligand>
</feature>
<feature type="binding site" evidence="3 6">
    <location>
        <position position="95"/>
    </location>
    <ligand>
        <name>Zn(2+)</name>
        <dbReference type="ChEBI" id="CHEBI:29105"/>
        <label>1</label>
    </ligand>
</feature>
<feature type="binding site" evidence="1">
    <location>
        <position position="96"/>
    </location>
    <ligand>
        <name>Ni(2+)</name>
        <dbReference type="ChEBI" id="CHEBI:49786"/>
    </ligand>
</feature>
<feature type="binding site" evidence="3 6">
    <location>
        <position position="96"/>
    </location>
    <ligand>
        <name>Zn(2+)</name>
        <dbReference type="ChEBI" id="CHEBI:29105"/>
        <label>1</label>
    </ligand>
</feature>
<feature type="binding site" evidence="3 6 7">
    <location>
        <position position="100"/>
    </location>
    <ligand>
        <name>Zn(2+)</name>
        <dbReference type="ChEBI" id="CHEBI:29105"/>
        <label>2</label>
    </ligand>
</feature>
<feature type="binding site" evidence="3 6 7">
    <location>
        <position position="104"/>
    </location>
    <ligand>
        <name>Zn(2+)</name>
        <dbReference type="ChEBI" id="CHEBI:29105"/>
        <label>2</label>
    </ligand>
</feature>
<feature type="binding site" evidence="1">
    <location>
        <position position="127"/>
    </location>
    <ligand>
        <name>Ni(2+)</name>
        <dbReference type="ChEBI" id="CHEBI:49786"/>
    </ligand>
</feature>
<feature type="binding site" evidence="3 6">
    <location>
        <position position="127"/>
    </location>
    <ligand>
        <name>Zn(2+)</name>
        <dbReference type="ChEBI" id="CHEBI:29105"/>
        <label>1</label>
    </ligand>
</feature>
<feature type="helix" evidence="8">
    <location>
        <begin position="13"/>
        <end position="30"/>
    </location>
</feature>
<feature type="strand" evidence="8">
    <location>
        <begin position="34"/>
        <end position="41"/>
    </location>
</feature>
<feature type="helix" evidence="8">
    <location>
        <begin position="46"/>
        <end position="57"/>
    </location>
</feature>
<feature type="turn" evidence="8">
    <location>
        <begin position="58"/>
        <end position="60"/>
    </location>
</feature>
<feature type="strand" evidence="8">
    <location>
        <begin position="63"/>
        <end position="69"/>
    </location>
</feature>
<feature type="turn" evidence="8">
    <location>
        <begin position="70"/>
        <end position="72"/>
    </location>
</feature>
<feature type="helix" evidence="8">
    <location>
        <begin position="73"/>
        <end position="80"/>
    </location>
</feature>
<feature type="turn" evidence="8">
    <location>
        <begin position="81"/>
        <end position="83"/>
    </location>
</feature>
<feature type="strand" evidence="8">
    <location>
        <begin position="85"/>
        <end position="90"/>
    </location>
</feature>
<feature type="helix" evidence="8">
    <location>
        <begin position="99"/>
        <end position="106"/>
    </location>
</feature>
<feature type="helix" evidence="8">
    <location>
        <begin position="111"/>
        <end position="113"/>
    </location>
</feature>
<feature type="strand" evidence="8">
    <location>
        <begin position="115"/>
        <end position="120"/>
    </location>
</feature>
<feature type="helix" evidence="8">
    <location>
        <begin position="127"/>
        <end position="130"/>
    </location>
</feature>
<feature type="strand" evidence="8">
    <location>
        <begin position="136"/>
        <end position="143"/>
    </location>
</feature>
<feature type="helix" evidence="8">
    <location>
        <begin position="144"/>
        <end position="146"/>
    </location>
</feature>
<feature type="turn" evidence="8">
    <location>
        <begin position="148"/>
        <end position="153"/>
    </location>
</feature>
<feature type="helix" evidence="8">
    <location>
        <begin position="155"/>
        <end position="158"/>
    </location>
</feature>
<feature type="strand" evidence="8">
    <location>
        <begin position="162"/>
        <end position="167"/>
    </location>
</feature>
<feature type="helix" evidence="8">
    <location>
        <begin position="169"/>
        <end position="171"/>
    </location>
</feature>
<feature type="helix" evidence="8">
    <location>
        <begin position="172"/>
        <end position="175"/>
    </location>
</feature>
<feature type="helix" evidence="8">
    <location>
        <begin position="179"/>
        <end position="189"/>
    </location>
</feature>
<feature type="strand" evidence="8">
    <location>
        <begin position="193"/>
        <end position="197"/>
    </location>
</feature>
<feature type="turn" evidence="8">
    <location>
        <begin position="200"/>
        <end position="202"/>
    </location>
</feature>
<feature type="helix" evidence="8">
    <location>
        <begin position="206"/>
        <end position="219"/>
    </location>
</feature>
<organism>
    <name type="scientific">Methanocaldococcus jannaschii (strain ATCC 43067 / DSM 2661 / JAL-1 / JCM 10045 / NBRC 100440)</name>
    <name type="common">Methanococcus jannaschii</name>
    <dbReference type="NCBI Taxonomy" id="243232"/>
    <lineage>
        <taxon>Archaea</taxon>
        <taxon>Methanobacteriati</taxon>
        <taxon>Methanobacteriota</taxon>
        <taxon>Methanomada group</taxon>
        <taxon>Methanococci</taxon>
        <taxon>Methanococcales</taxon>
        <taxon>Methanocaldococcaceae</taxon>
        <taxon>Methanocaldococcus</taxon>
    </lineage>
</organism>
<proteinExistence type="evidence at protein level"/>
<comment type="function">
    <text evidence="2">Involved in the maturation of [NiFe] hydrogenases. Required for nickel insertion into the metal center of the hydrogenase. Exhibits a low intrinsic GTPase activity, which is essential for nickel insertion.</text>
</comment>
<comment type="subunit">
    <text evidence="3">Homodimer.</text>
</comment>
<comment type="similarity">
    <text evidence="5">Belongs to the SIMIBI class G3E GTPase family. HypB/HupM subfamily.</text>
</comment>
<accession>Q57884</accession>
<protein>
    <recommendedName>
        <fullName evidence="5">Probable hydrogenase maturation factor HypB</fullName>
    </recommendedName>
</protein>
<sequence>MHLVGVLDIAKDILKANKRLADKNRKLLNKHGVVAFDFMGAIGSGKTLLIEKLIDNLKDKYKIACIAGDVIAKFDAERMEKHGAKVVPLNTGKECHLDAHLVGHALEDLNLDEIDLLFIENVGNLICPADFDLGTHKRIVVISTTEGDDTIEKHPGIMKTADLIVINKIDLADAVGADIKKMENDAKRINPDAEVVLLSLKTMEGFDKVLEFIEKSVKEVK</sequence>